<proteinExistence type="inferred from homology"/>
<name>DNAK_VIBC1</name>
<dbReference type="EMBL" id="CP000789">
    <property type="protein sequence ID" value="ABU70124.1"/>
    <property type="molecule type" value="Genomic_DNA"/>
</dbReference>
<dbReference type="RefSeq" id="WP_012127136.1">
    <property type="nucleotide sequence ID" value="NC_022269.1"/>
</dbReference>
<dbReference type="SMR" id="A7MWW0"/>
<dbReference type="KEGG" id="vha:VIBHAR_01134"/>
<dbReference type="PATRIC" id="fig|338187.25.peg.1494"/>
<dbReference type="Proteomes" id="UP000008152">
    <property type="component" value="Chromosome I"/>
</dbReference>
<dbReference type="GO" id="GO:0005524">
    <property type="term" value="F:ATP binding"/>
    <property type="evidence" value="ECO:0007669"/>
    <property type="project" value="UniProtKB-UniRule"/>
</dbReference>
<dbReference type="GO" id="GO:0140662">
    <property type="term" value="F:ATP-dependent protein folding chaperone"/>
    <property type="evidence" value="ECO:0007669"/>
    <property type="project" value="InterPro"/>
</dbReference>
<dbReference type="GO" id="GO:0051082">
    <property type="term" value="F:unfolded protein binding"/>
    <property type="evidence" value="ECO:0007669"/>
    <property type="project" value="InterPro"/>
</dbReference>
<dbReference type="CDD" id="cd10234">
    <property type="entry name" value="ASKHA_NBD_HSP70_DnaK-like"/>
    <property type="match status" value="1"/>
</dbReference>
<dbReference type="FunFam" id="2.60.34.10:FF:000014">
    <property type="entry name" value="Chaperone protein DnaK HSP70"/>
    <property type="match status" value="1"/>
</dbReference>
<dbReference type="FunFam" id="1.20.1270.10:FF:000001">
    <property type="entry name" value="Molecular chaperone DnaK"/>
    <property type="match status" value="1"/>
</dbReference>
<dbReference type="FunFam" id="3.30.420.40:FF:000004">
    <property type="entry name" value="Molecular chaperone DnaK"/>
    <property type="match status" value="1"/>
</dbReference>
<dbReference type="FunFam" id="3.90.640.10:FF:000003">
    <property type="entry name" value="Molecular chaperone DnaK"/>
    <property type="match status" value="1"/>
</dbReference>
<dbReference type="Gene3D" id="1.20.1270.10">
    <property type="match status" value="1"/>
</dbReference>
<dbReference type="Gene3D" id="3.30.420.40">
    <property type="match status" value="2"/>
</dbReference>
<dbReference type="Gene3D" id="3.90.640.10">
    <property type="entry name" value="Actin, Chain A, domain 4"/>
    <property type="match status" value="1"/>
</dbReference>
<dbReference type="Gene3D" id="2.60.34.10">
    <property type="entry name" value="Substrate Binding Domain Of DNAk, Chain A, domain 1"/>
    <property type="match status" value="1"/>
</dbReference>
<dbReference type="HAMAP" id="MF_00332">
    <property type="entry name" value="DnaK"/>
    <property type="match status" value="1"/>
</dbReference>
<dbReference type="InterPro" id="IPR043129">
    <property type="entry name" value="ATPase_NBD"/>
</dbReference>
<dbReference type="InterPro" id="IPR012725">
    <property type="entry name" value="Chaperone_DnaK"/>
</dbReference>
<dbReference type="InterPro" id="IPR018181">
    <property type="entry name" value="Heat_shock_70_CS"/>
</dbReference>
<dbReference type="InterPro" id="IPR029048">
    <property type="entry name" value="HSP70_C_sf"/>
</dbReference>
<dbReference type="InterPro" id="IPR029047">
    <property type="entry name" value="HSP70_peptide-bd_sf"/>
</dbReference>
<dbReference type="InterPro" id="IPR013126">
    <property type="entry name" value="Hsp_70_fam"/>
</dbReference>
<dbReference type="NCBIfam" id="NF001413">
    <property type="entry name" value="PRK00290.1"/>
    <property type="match status" value="1"/>
</dbReference>
<dbReference type="NCBIfam" id="TIGR02350">
    <property type="entry name" value="prok_dnaK"/>
    <property type="match status" value="1"/>
</dbReference>
<dbReference type="PANTHER" id="PTHR19375">
    <property type="entry name" value="HEAT SHOCK PROTEIN 70KDA"/>
    <property type="match status" value="1"/>
</dbReference>
<dbReference type="Pfam" id="PF00012">
    <property type="entry name" value="HSP70"/>
    <property type="match status" value="1"/>
</dbReference>
<dbReference type="PRINTS" id="PR00301">
    <property type="entry name" value="HEATSHOCK70"/>
</dbReference>
<dbReference type="SUPFAM" id="SSF53067">
    <property type="entry name" value="Actin-like ATPase domain"/>
    <property type="match status" value="2"/>
</dbReference>
<dbReference type="SUPFAM" id="SSF100934">
    <property type="entry name" value="Heat shock protein 70kD (HSP70), C-terminal subdomain"/>
    <property type="match status" value="1"/>
</dbReference>
<dbReference type="SUPFAM" id="SSF100920">
    <property type="entry name" value="Heat shock protein 70kD (HSP70), peptide-binding domain"/>
    <property type="match status" value="1"/>
</dbReference>
<dbReference type="PROSITE" id="PS00297">
    <property type="entry name" value="HSP70_1"/>
    <property type="match status" value="1"/>
</dbReference>
<dbReference type="PROSITE" id="PS00329">
    <property type="entry name" value="HSP70_2"/>
    <property type="match status" value="1"/>
</dbReference>
<dbReference type="PROSITE" id="PS01036">
    <property type="entry name" value="HSP70_3"/>
    <property type="match status" value="1"/>
</dbReference>
<evidence type="ECO:0000255" key="1">
    <source>
        <dbReference type="HAMAP-Rule" id="MF_00332"/>
    </source>
</evidence>
<evidence type="ECO:0000256" key="2">
    <source>
        <dbReference type="SAM" id="MobiDB-lite"/>
    </source>
</evidence>
<feature type="chain" id="PRO_1000059697" description="Chaperone protein DnaK">
    <location>
        <begin position="1"/>
        <end position="638"/>
    </location>
</feature>
<feature type="region of interest" description="Disordered" evidence="2">
    <location>
        <begin position="603"/>
        <end position="638"/>
    </location>
</feature>
<feature type="compositionally biased region" description="Low complexity" evidence="2">
    <location>
        <begin position="603"/>
        <end position="618"/>
    </location>
</feature>
<feature type="compositionally biased region" description="Acidic residues" evidence="2">
    <location>
        <begin position="624"/>
        <end position="638"/>
    </location>
</feature>
<feature type="modified residue" description="Phosphothreonine; by autocatalysis" evidence="1">
    <location>
        <position position="198"/>
    </location>
</feature>
<sequence length="638" mass="68952">MGKIIGIDLGTTNSCVAVLDGDKPRVIENAEGERTTASVVAYTDGETLVGQPAKRQAVTNPTNTLFAIKRLIGRRFEDEEVQRDIEIMPYKIVKADNGDAWVEAQGQKMAAPQVSAEILKKMKKTAEDFLGEEVTGAVITVPAYFNDAQRQATKDAGRIAGLEVKRIINEPTAAALAYGLDKSGGDRTIAVYDLGGGTFDISIIEIDEVEGEKTFEVLATNGDTHLGGEDFDTRLINYLVDEFNKEQGINLKNDPLAMQRVKEAAEKAKIELSSTSQTDVNLPYVTADATGPKHMNVKVTRAKLESLVEDLVQRSLEPLKVALADADLSVNDITDVILVGGQTRMPMVQAKVAEFFGKEARRDVNPDEAVAMGAAVQGGVLAGDVKDVLLLDVTPLSLGIETMGGVMTKLVEKNTTIPTKANQVFSTAEDNQSAVTIHVLQGERKQASFNKSLGQFNLEGIQAAPRGMPQIEVTFDLDADGILHVSAKDKQTGKEQKITIQASGGLSDEDIEKMVQEAEANKEADKKFEELAAARNQADQMIHGTRKQVEEAGEALPAEEKEKIEAAISELETARKGDDKEAIDAKVQALMTAAQKLMEIAQQQAQAQQAQGADADAQQSKEDDVVDAEFEEVKDDKK</sequence>
<comment type="function">
    <text evidence="1">Acts as a chaperone.</text>
</comment>
<comment type="induction">
    <text evidence="1">By stress conditions e.g. heat shock.</text>
</comment>
<comment type="similarity">
    <text evidence="1">Belongs to the heat shock protein 70 family.</text>
</comment>
<gene>
    <name evidence="1" type="primary">dnaK</name>
    <name type="ordered locus">VIBHAR_01134</name>
</gene>
<reference key="1">
    <citation type="submission" date="2007-08" db="EMBL/GenBank/DDBJ databases">
        <authorList>
            <consortium name="The Vibrio harveyi Genome Sequencing Project"/>
            <person name="Bassler B."/>
            <person name="Clifton S.W."/>
            <person name="Fulton L."/>
            <person name="Delehaunty K."/>
            <person name="Fronick C."/>
            <person name="Harrison M."/>
            <person name="Markivic C."/>
            <person name="Fulton R."/>
            <person name="Tin-Wollam A.-M."/>
            <person name="Shah N."/>
            <person name="Pepin K."/>
            <person name="Nash W."/>
            <person name="Thiruvilangam P."/>
            <person name="Bhonagiri V."/>
            <person name="Waters C."/>
            <person name="Tu K.C."/>
            <person name="Irgon J."/>
            <person name="Wilson R.K."/>
        </authorList>
    </citation>
    <scope>NUCLEOTIDE SEQUENCE [LARGE SCALE GENOMIC DNA]</scope>
    <source>
        <strain>ATCC BAA-1116 / BB120</strain>
    </source>
</reference>
<accession>A7MWW0</accession>
<organism>
    <name type="scientific">Vibrio campbellii (strain ATCC BAA-1116)</name>
    <dbReference type="NCBI Taxonomy" id="2902295"/>
    <lineage>
        <taxon>Bacteria</taxon>
        <taxon>Pseudomonadati</taxon>
        <taxon>Pseudomonadota</taxon>
        <taxon>Gammaproteobacteria</taxon>
        <taxon>Vibrionales</taxon>
        <taxon>Vibrionaceae</taxon>
        <taxon>Vibrio</taxon>
    </lineage>
</organism>
<protein>
    <recommendedName>
        <fullName evidence="1">Chaperone protein DnaK</fullName>
    </recommendedName>
    <alternativeName>
        <fullName evidence="1">HSP70</fullName>
    </alternativeName>
    <alternativeName>
        <fullName evidence="1">Heat shock 70 kDa protein</fullName>
    </alternativeName>
    <alternativeName>
        <fullName evidence="1">Heat shock protein 70</fullName>
    </alternativeName>
</protein>
<keyword id="KW-0067">ATP-binding</keyword>
<keyword id="KW-0143">Chaperone</keyword>
<keyword id="KW-0547">Nucleotide-binding</keyword>
<keyword id="KW-0597">Phosphoprotein</keyword>
<keyword id="KW-0346">Stress response</keyword>